<comment type="function">
    <text evidence="1">ATP-binding RNA helicase involved in the biogenesis of 60S ribosomal subunits and is required for the normal formation of 25S and 5.8S rRNAs.</text>
</comment>
<comment type="catalytic activity">
    <reaction>
        <text>ATP + H2O = ADP + phosphate + H(+)</text>
        <dbReference type="Rhea" id="RHEA:13065"/>
        <dbReference type="ChEBI" id="CHEBI:15377"/>
        <dbReference type="ChEBI" id="CHEBI:15378"/>
        <dbReference type="ChEBI" id="CHEBI:30616"/>
        <dbReference type="ChEBI" id="CHEBI:43474"/>
        <dbReference type="ChEBI" id="CHEBI:456216"/>
        <dbReference type="EC" id="3.6.4.13"/>
    </reaction>
</comment>
<comment type="subcellular location">
    <subcellularLocation>
        <location evidence="1">Nucleus</location>
        <location evidence="1">Nucleolus</location>
    </subcellularLocation>
</comment>
<comment type="domain">
    <text>The Q motif is unique to and characteristic of the DEAD box family of RNA helicases and controls ATP binding and hydrolysis.</text>
</comment>
<comment type="similarity">
    <text evidence="5">Belongs to the DEAD box helicase family. DDX24/MAK5 subfamily.</text>
</comment>
<gene>
    <name type="primary">MAK5</name>
    <name type="ORF">SNOG_12492</name>
</gene>
<proteinExistence type="inferred from homology"/>
<accession>Q0U6X2</accession>
<reference key="1">
    <citation type="journal article" date="2007" name="Plant Cell">
        <title>Dothideomycete-plant interactions illuminated by genome sequencing and EST analysis of the wheat pathogen Stagonospora nodorum.</title>
        <authorList>
            <person name="Hane J.K."/>
            <person name="Lowe R.G.T."/>
            <person name="Solomon P.S."/>
            <person name="Tan K.-C."/>
            <person name="Schoch C.L."/>
            <person name="Spatafora J.W."/>
            <person name="Crous P.W."/>
            <person name="Kodira C.D."/>
            <person name="Birren B.W."/>
            <person name="Galagan J.E."/>
            <person name="Torriani S.F.F."/>
            <person name="McDonald B.A."/>
            <person name="Oliver R.P."/>
        </authorList>
    </citation>
    <scope>NUCLEOTIDE SEQUENCE [LARGE SCALE GENOMIC DNA]</scope>
    <source>
        <strain>SN15 / ATCC MYA-4574 / FGSC 10173</strain>
    </source>
</reference>
<sequence length="817" mass="90193">MKRAHKAPKASHKAHKRQKVEKKPRPEINVPKRKIRLDDLGWNQVSMPDRLEDFEGFYGLEEIEDVHVVKDAVTGNLSFETTKTDEQIEQDIEKAWQREEEEAKFLEKITFGGEPKNGEDVVEEETAPVEDTVEATQDEDAASWGGFSDDDVAQNGDEQSEDVQMVEEDAPPTPNVVLSTTKADGDGEAEPKKMNKRERAAEKKRIAALAKKTKKPDDDEASEGKTFGPGAFDILANRADDEDDEVDVSAWEELELSTKILESLAKLKFSKPTTIQASTIPEIMAGRDVIGKASTGSGKTLAFGIPIIESYLASKSKSKDVKDKTPLALIIAPTRELAHQITAHLTALCAKGAFEAPLIASVTGGLAVQKQRRQLEKADIIVGTPGRLWEVISTGHGLLEKVKQIRFLVVDEADRLLSQGNYKELGEILKILEKDAPAEGEAEAEETTEVERQTLVFSATFQKGLQQKLAGKAKGGSDNLMSKQQSMEYLLKKINFREEKPKFIDANPSSQMASKLKEGLIECAGTEKDLYLYSLLMFYPKKRALIFTNSISAVRRLTPFLQNLALPALPLHSSMAQKARLRSIERFKERPGSILVATDVAARGLDIPKVELVIHYHLPRAADTYVHRSGRTARAEASGSSILICAPEEVGGVRRLIAKVHARADEAPKSKKTAYFIRTLDIDRRIVARLKPRASISKKLADTVIAKEKKHSEDDTLRQAAEDLGVDYDSEEFEKEAKGKKGRGTGRKKKEKEASEMTKGEQQALRAELRGLLSQRINTGVSARYLTSGGIDVDALMAGEGNMEFLGNVDGLGFDEE</sequence>
<name>MAK5_PHANO</name>
<keyword id="KW-0067">ATP-binding</keyword>
<keyword id="KW-0347">Helicase</keyword>
<keyword id="KW-0378">Hydrolase</keyword>
<keyword id="KW-0547">Nucleotide-binding</keyword>
<keyword id="KW-0539">Nucleus</keyword>
<keyword id="KW-0690">Ribosome biogenesis</keyword>
<keyword id="KW-0694">RNA-binding</keyword>
<keyword id="KW-0698">rRNA processing</keyword>
<dbReference type="EC" id="3.6.4.13"/>
<dbReference type="EMBL" id="CH445346">
    <property type="protein sequence ID" value="EAT80305.1"/>
    <property type="molecule type" value="Genomic_DNA"/>
</dbReference>
<dbReference type="RefSeq" id="XP_001802714.1">
    <property type="nucleotide sequence ID" value="XM_001802662.1"/>
</dbReference>
<dbReference type="SMR" id="Q0U6X2"/>
<dbReference type="FunCoup" id="Q0U6X2">
    <property type="interactions" value="875"/>
</dbReference>
<dbReference type="STRING" id="321614.Q0U6X2"/>
<dbReference type="EnsemblFungi" id="SNOT_12492">
    <property type="protein sequence ID" value="SNOT_12492"/>
    <property type="gene ID" value="SNOG_12492"/>
</dbReference>
<dbReference type="GeneID" id="5979623"/>
<dbReference type="KEGG" id="pno:SNOG_12492"/>
<dbReference type="VEuPathDB" id="FungiDB:JI435_124920"/>
<dbReference type="eggNOG" id="KOG0347">
    <property type="taxonomic scope" value="Eukaryota"/>
</dbReference>
<dbReference type="HOGENOM" id="CLU_003041_13_0_1"/>
<dbReference type="InParanoid" id="Q0U6X2"/>
<dbReference type="OMA" id="QMIQKAR"/>
<dbReference type="OrthoDB" id="4310724at2759"/>
<dbReference type="Proteomes" id="UP000001055">
    <property type="component" value="Unassembled WGS sequence"/>
</dbReference>
<dbReference type="GO" id="GO:0005730">
    <property type="term" value="C:nucleolus"/>
    <property type="evidence" value="ECO:0000318"/>
    <property type="project" value="GO_Central"/>
</dbReference>
<dbReference type="GO" id="GO:0005524">
    <property type="term" value="F:ATP binding"/>
    <property type="evidence" value="ECO:0007669"/>
    <property type="project" value="UniProtKB-KW"/>
</dbReference>
<dbReference type="GO" id="GO:0016887">
    <property type="term" value="F:ATP hydrolysis activity"/>
    <property type="evidence" value="ECO:0007669"/>
    <property type="project" value="RHEA"/>
</dbReference>
<dbReference type="GO" id="GO:0003723">
    <property type="term" value="F:RNA binding"/>
    <property type="evidence" value="ECO:0007669"/>
    <property type="project" value="UniProtKB-KW"/>
</dbReference>
<dbReference type="GO" id="GO:0003724">
    <property type="term" value="F:RNA helicase activity"/>
    <property type="evidence" value="ECO:0007669"/>
    <property type="project" value="UniProtKB-EC"/>
</dbReference>
<dbReference type="GO" id="GO:0006364">
    <property type="term" value="P:rRNA processing"/>
    <property type="evidence" value="ECO:0007669"/>
    <property type="project" value="UniProtKB-KW"/>
</dbReference>
<dbReference type="CDD" id="cd17946">
    <property type="entry name" value="DEADc_DDX24"/>
    <property type="match status" value="1"/>
</dbReference>
<dbReference type="CDD" id="cd18787">
    <property type="entry name" value="SF2_C_DEAD"/>
    <property type="match status" value="1"/>
</dbReference>
<dbReference type="Gene3D" id="3.40.50.300">
    <property type="entry name" value="P-loop containing nucleotide triphosphate hydrolases"/>
    <property type="match status" value="2"/>
</dbReference>
<dbReference type="InterPro" id="IPR011545">
    <property type="entry name" value="DEAD/DEAH_box_helicase_dom"/>
</dbReference>
<dbReference type="InterPro" id="IPR014001">
    <property type="entry name" value="Helicase_ATP-bd"/>
</dbReference>
<dbReference type="InterPro" id="IPR001650">
    <property type="entry name" value="Helicase_C-like"/>
</dbReference>
<dbReference type="InterPro" id="IPR027417">
    <property type="entry name" value="P-loop_NTPase"/>
</dbReference>
<dbReference type="InterPro" id="IPR000629">
    <property type="entry name" value="RNA-helicase_DEAD-box_CS"/>
</dbReference>
<dbReference type="InterPro" id="IPR014014">
    <property type="entry name" value="RNA_helicase_DEAD_Q_motif"/>
</dbReference>
<dbReference type="PANTHER" id="PTHR24031">
    <property type="entry name" value="RNA HELICASE"/>
    <property type="match status" value="1"/>
</dbReference>
<dbReference type="Pfam" id="PF00270">
    <property type="entry name" value="DEAD"/>
    <property type="match status" value="1"/>
</dbReference>
<dbReference type="Pfam" id="PF00271">
    <property type="entry name" value="Helicase_C"/>
    <property type="match status" value="1"/>
</dbReference>
<dbReference type="SMART" id="SM00487">
    <property type="entry name" value="DEXDc"/>
    <property type="match status" value="1"/>
</dbReference>
<dbReference type="SMART" id="SM00490">
    <property type="entry name" value="HELICc"/>
    <property type="match status" value="1"/>
</dbReference>
<dbReference type="SUPFAM" id="SSF52540">
    <property type="entry name" value="P-loop containing nucleoside triphosphate hydrolases"/>
    <property type="match status" value="1"/>
</dbReference>
<dbReference type="PROSITE" id="PS00039">
    <property type="entry name" value="DEAD_ATP_HELICASE"/>
    <property type="match status" value="1"/>
</dbReference>
<dbReference type="PROSITE" id="PS51192">
    <property type="entry name" value="HELICASE_ATP_BIND_1"/>
    <property type="match status" value="1"/>
</dbReference>
<dbReference type="PROSITE" id="PS51194">
    <property type="entry name" value="HELICASE_CTER"/>
    <property type="match status" value="1"/>
</dbReference>
<dbReference type="PROSITE" id="PS51195">
    <property type="entry name" value="Q_MOTIF"/>
    <property type="match status" value="1"/>
</dbReference>
<feature type="chain" id="PRO_0000256021" description="ATP-dependent RNA helicase MAK5">
    <location>
        <begin position="1"/>
        <end position="817"/>
    </location>
</feature>
<feature type="domain" description="Helicase ATP-binding" evidence="2">
    <location>
        <begin position="280"/>
        <end position="479"/>
    </location>
</feature>
<feature type="domain" description="Helicase C-terminal" evidence="3">
    <location>
        <begin position="531"/>
        <end position="675"/>
    </location>
</feature>
<feature type="region of interest" description="Disordered" evidence="4">
    <location>
        <begin position="1"/>
        <end position="29"/>
    </location>
</feature>
<feature type="region of interest" description="Disordered" evidence="4">
    <location>
        <begin position="110"/>
        <end position="231"/>
    </location>
</feature>
<feature type="region of interest" description="Disordered" evidence="4">
    <location>
        <begin position="731"/>
        <end position="763"/>
    </location>
</feature>
<feature type="short sequence motif" description="Q motif">
    <location>
        <begin position="249"/>
        <end position="277"/>
    </location>
</feature>
<feature type="short sequence motif" description="DEAD box">
    <location>
        <begin position="411"/>
        <end position="414"/>
    </location>
</feature>
<feature type="compositionally biased region" description="Basic residues" evidence="4">
    <location>
        <begin position="1"/>
        <end position="20"/>
    </location>
</feature>
<feature type="compositionally biased region" description="Acidic residues" evidence="4">
    <location>
        <begin position="120"/>
        <end position="141"/>
    </location>
</feature>
<feature type="compositionally biased region" description="Acidic residues" evidence="4">
    <location>
        <begin position="148"/>
        <end position="170"/>
    </location>
</feature>
<feature type="compositionally biased region" description="Basic and acidic residues" evidence="4">
    <location>
        <begin position="183"/>
        <end position="205"/>
    </location>
</feature>
<feature type="compositionally biased region" description="Basic residues" evidence="4">
    <location>
        <begin position="738"/>
        <end position="750"/>
    </location>
</feature>
<feature type="binding site" evidence="2">
    <location>
        <begin position="293"/>
        <end position="300"/>
    </location>
    <ligand>
        <name>ATP</name>
        <dbReference type="ChEBI" id="CHEBI:30616"/>
    </ligand>
</feature>
<evidence type="ECO:0000250" key="1"/>
<evidence type="ECO:0000255" key="2">
    <source>
        <dbReference type="PROSITE-ProRule" id="PRU00541"/>
    </source>
</evidence>
<evidence type="ECO:0000255" key="3">
    <source>
        <dbReference type="PROSITE-ProRule" id="PRU00542"/>
    </source>
</evidence>
<evidence type="ECO:0000256" key="4">
    <source>
        <dbReference type="SAM" id="MobiDB-lite"/>
    </source>
</evidence>
<evidence type="ECO:0000305" key="5"/>
<protein>
    <recommendedName>
        <fullName>ATP-dependent RNA helicase MAK5</fullName>
        <ecNumber>3.6.4.13</ecNumber>
    </recommendedName>
</protein>
<organism>
    <name type="scientific">Phaeosphaeria nodorum (strain SN15 / ATCC MYA-4574 / FGSC 10173)</name>
    <name type="common">Glume blotch fungus</name>
    <name type="synonym">Parastagonospora nodorum</name>
    <dbReference type="NCBI Taxonomy" id="321614"/>
    <lineage>
        <taxon>Eukaryota</taxon>
        <taxon>Fungi</taxon>
        <taxon>Dikarya</taxon>
        <taxon>Ascomycota</taxon>
        <taxon>Pezizomycotina</taxon>
        <taxon>Dothideomycetes</taxon>
        <taxon>Pleosporomycetidae</taxon>
        <taxon>Pleosporales</taxon>
        <taxon>Pleosporineae</taxon>
        <taxon>Phaeosphaeriaceae</taxon>
        <taxon>Parastagonospora</taxon>
    </lineage>
</organism>